<reference key="1">
    <citation type="journal article" date="2001" name="J. Bacteriol.">
        <title>Genome sequence and comparative analysis of the solvent-producing bacterium Clostridium acetobutylicum.</title>
        <authorList>
            <person name="Noelling J."/>
            <person name="Breton G."/>
            <person name="Omelchenko M.V."/>
            <person name="Makarova K.S."/>
            <person name="Zeng Q."/>
            <person name="Gibson R."/>
            <person name="Lee H.M."/>
            <person name="Dubois J."/>
            <person name="Qiu D."/>
            <person name="Hitti J."/>
            <person name="Wolf Y.I."/>
            <person name="Tatusov R.L."/>
            <person name="Sabathe F."/>
            <person name="Doucette-Stamm L.A."/>
            <person name="Soucaille P."/>
            <person name="Daly M.J."/>
            <person name="Bennett G.N."/>
            <person name="Koonin E.V."/>
            <person name="Smith D.R."/>
        </authorList>
    </citation>
    <scope>NUCLEOTIDE SEQUENCE [LARGE SCALE GENOMIC DNA]</scope>
    <source>
        <strain>ATCC 824 / DSM 792 / JCM 1419 / IAM 19013 / LMG 5710 / NBRC 13948 / NRRL B-527 / VKM B-1787 / 2291 / W</strain>
    </source>
</reference>
<accession>Q97LX0</accession>
<keyword id="KW-0414">Isoprene biosynthesis</keyword>
<keyword id="KW-0456">Lyase</keyword>
<keyword id="KW-0479">Metal-binding</keyword>
<keyword id="KW-1185">Reference proteome</keyword>
<comment type="function">
    <text evidence="1">Involved in the biosynthesis of isopentenyl diphosphate (IPP) and dimethylallyl diphosphate (DMAPP), two major building blocks of isoprenoid compounds. Catalyzes the conversion of 4-diphosphocytidyl-2-C-methyl-D-erythritol 2-phosphate (CDP-ME2P) to 2-C-methyl-D-erythritol 2,4-cyclodiphosphate (ME-CPP) with a corresponding release of cytidine 5-monophosphate (CMP).</text>
</comment>
<comment type="catalytic activity">
    <reaction evidence="1">
        <text>4-CDP-2-C-methyl-D-erythritol 2-phosphate = 2-C-methyl-D-erythritol 2,4-cyclic diphosphate + CMP</text>
        <dbReference type="Rhea" id="RHEA:23864"/>
        <dbReference type="ChEBI" id="CHEBI:57919"/>
        <dbReference type="ChEBI" id="CHEBI:58483"/>
        <dbReference type="ChEBI" id="CHEBI:60377"/>
        <dbReference type="EC" id="4.6.1.12"/>
    </reaction>
</comment>
<comment type="cofactor">
    <cofactor evidence="1">
        <name>a divalent metal cation</name>
        <dbReference type="ChEBI" id="CHEBI:60240"/>
    </cofactor>
    <text evidence="1">Binds 1 divalent metal cation per subunit.</text>
</comment>
<comment type="pathway">
    <text evidence="1">Isoprenoid biosynthesis; isopentenyl diphosphate biosynthesis via DXP pathway; isopentenyl diphosphate from 1-deoxy-D-xylulose 5-phosphate: step 4/6.</text>
</comment>
<comment type="subunit">
    <text evidence="1">Homotrimer.</text>
</comment>
<comment type="similarity">
    <text evidence="1">Belongs to the IspF family.</text>
</comment>
<gene>
    <name evidence="1" type="primary">ispF</name>
    <name type="ordered locus">CA_C0434</name>
</gene>
<name>ISPF_CLOAB</name>
<protein>
    <recommendedName>
        <fullName evidence="1">2-C-methyl-D-erythritol 2,4-cyclodiphosphate synthase</fullName>
        <shortName evidence="1">MECDP-synthase</shortName>
        <shortName evidence="1">MECPP-synthase</shortName>
        <shortName evidence="1">MECPS</shortName>
        <ecNumber evidence="1">4.6.1.12</ecNumber>
    </recommendedName>
</protein>
<sequence>MRVGIGYDVHKLVENRKLILGGVEIQYSKGLLGHSDADVLVHAIIDSILGAAGLGDIGKLFPDSDNKYKGISSLKLLKEVNALIKDKGYKIGNIDSTIIAQKPKISPYIEDIKKSLCNVLDIDLGSINIKATTEEGLGFTGRGEGISSQSICLLI</sequence>
<proteinExistence type="inferred from homology"/>
<organism>
    <name type="scientific">Clostridium acetobutylicum (strain ATCC 824 / DSM 792 / JCM 1419 / IAM 19013 / LMG 5710 / NBRC 13948 / NRRL B-527 / VKM B-1787 / 2291 / W)</name>
    <dbReference type="NCBI Taxonomy" id="272562"/>
    <lineage>
        <taxon>Bacteria</taxon>
        <taxon>Bacillati</taxon>
        <taxon>Bacillota</taxon>
        <taxon>Clostridia</taxon>
        <taxon>Eubacteriales</taxon>
        <taxon>Clostridiaceae</taxon>
        <taxon>Clostridium</taxon>
    </lineage>
</organism>
<evidence type="ECO:0000255" key="1">
    <source>
        <dbReference type="HAMAP-Rule" id="MF_00107"/>
    </source>
</evidence>
<feature type="chain" id="PRO_0000189457" description="2-C-methyl-D-erythritol 2,4-cyclodiphosphate synthase">
    <location>
        <begin position="1"/>
        <end position="155"/>
    </location>
</feature>
<feature type="binding site" evidence="1">
    <location>
        <begin position="8"/>
        <end position="10"/>
    </location>
    <ligand>
        <name>4-CDP-2-C-methyl-D-erythritol 2-phosphate</name>
        <dbReference type="ChEBI" id="CHEBI:57919"/>
    </ligand>
</feature>
<feature type="binding site" evidence="1">
    <location>
        <position position="8"/>
    </location>
    <ligand>
        <name>a divalent metal cation</name>
        <dbReference type="ChEBI" id="CHEBI:60240"/>
    </ligand>
</feature>
<feature type="binding site" evidence="1">
    <location>
        <position position="10"/>
    </location>
    <ligand>
        <name>a divalent metal cation</name>
        <dbReference type="ChEBI" id="CHEBI:60240"/>
    </ligand>
</feature>
<feature type="binding site" evidence="1">
    <location>
        <begin position="34"/>
        <end position="35"/>
    </location>
    <ligand>
        <name>4-CDP-2-C-methyl-D-erythritol 2-phosphate</name>
        <dbReference type="ChEBI" id="CHEBI:57919"/>
    </ligand>
</feature>
<feature type="binding site" evidence="1">
    <location>
        <position position="42"/>
    </location>
    <ligand>
        <name>a divalent metal cation</name>
        <dbReference type="ChEBI" id="CHEBI:60240"/>
    </ligand>
</feature>
<feature type="binding site" evidence="1">
    <location>
        <begin position="56"/>
        <end position="58"/>
    </location>
    <ligand>
        <name>4-CDP-2-C-methyl-D-erythritol 2-phosphate</name>
        <dbReference type="ChEBI" id="CHEBI:57919"/>
    </ligand>
</feature>
<feature type="binding site" evidence="1">
    <location>
        <begin position="61"/>
        <end position="65"/>
    </location>
    <ligand>
        <name>4-CDP-2-C-methyl-D-erythritol 2-phosphate</name>
        <dbReference type="ChEBI" id="CHEBI:57919"/>
    </ligand>
</feature>
<feature type="binding site" evidence="1">
    <location>
        <begin position="132"/>
        <end position="135"/>
    </location>
    <ligand>
        <name>4-CDP-2-C-methyl-D-erythritol 2-phosphate</name>
        <dbReference type="ChEBI" id="CHEBI:57919"/>
    </ligand>
</feature>
<feature type="binding site" evidence="1">
    <location>
        <position position="139"/>
    </location>
    <ligand>
        <name>4-CDP-2-C-methyl-D-erythritol 2-phosphate</name>
        <dbReference type="ChEBI" id="CHEBI:57919"/>
    </ligand>
</feature>
<feature type="binding site" evidence="1">
    <location>
        <position position="142"/>
    </location>
    <ligand>
        <name>4-CDP-2-C-methyl-D-erythritol 2-phosphate</name>
        <dbReference type="ChEBI" id="CHEBI:57919"/>
    </ligand>
</feature>
<feature type="site" description="Transition state stabilizer" evidence="1">
    <location>
        <position position="34"/>
    </location>
</feature>
<feature type="site" description="Transition state stabilizer" evidence="1">
    <location>
        <position position="133"/>
    </location>
</feature>
<dbReference type="EC" id="4.6.1.12" evidence="1"/>
<dbReference type="EMBL" id="AE001437">
    <property type="protein sequence ID" value="AAK78414.1"/>
    <property type="molecule type" value="Genomic_DNA"/>
</dbReference>
<dbReference type="PIR" id="C96953">
    <property type="entry name" value="C96953"/>
</dbReference>
<dbReference type="RefSeq" id="NP_347074.1">
    <property type="nucleotide sequence ID" value="NC_003030.1"/>
</dbReference>
<dbReference type="RefSeq" id="WP_010963756.1">
    <property type="nucleotide sequence ID" value="NC_003030.1"/>
</dbReference>
<dbReference type="SMR" id="Q97LX0"/>
<dbReference type="STRING" id="272562.CA_C0434"/>
<dbReference type="GeneID" id="44996944"/>
<dbReference type="KEGG" id="cac:CA_C0434"/>
<dbReference type="PATRIC" id="fig|272562.8.peg.633"/>
<dbReference type="eggNOG" id="COG0245">
    <property type="taxonomic scope" value="Bacteria"/>
</dbReference>
<dbReference type="HOGENOM" id="CLU_084630_2_0_9"/>
<dbReference type="OrthoDB" id="9804336at2"/>
<dbReference type="UniPathway" id="UPA00056">
    <property type="reaction ID" value="UER00095"/>
</dbReference>
<dbReference type="Proteomes" id="UP000000814">
    <property type="component" value="Chromosome"/>
</dbReference>
<dbReference type="GO" id="GO:0008685">
    <property type="term" value="F:2-C-methyl-D-erythritol 2,4-cyclodiphosphate synthase activity"/>
    <property type="evidence" value="ECO:0007669"/>
    <property type="project" value="UniProtKB-UniRule"/>
</dbReference>
<dbReference type="GO" id="GO:0046872">
    <property type="term" value="F:metal ion binding"/>
    <property type="evidence" value="ECO:0007669"/>
    <property type="project" value="UniProtKB-KW"/>
</dbReference>
<dbReference type="GO" id="GO:0019288">
    <property type="term" value="P:isopentenyl diphosphate biosynthetic process, methylerythritol 4-phosphate pathway"/>
    <property type="evidence" value="ECO:0007669"/>
    <property type="project" value="UniProtKB-UniRule"/>
</dbReference>
<dbReference type="GO" id="GO:0016114">
    <property type="term" value="P:terpenoid biosynthetic process"/>
    <property type="evidence" value="ECO:0007669"/>
    <property type="project" value="InterPro"/>
</dbReference>
<dbReference type="CDD" id="cd00554">
    <property type="entry name" value="MECDP_synthase"/>
    <property type="match status" value="1"/>
</dbReference>
<dbReference type="FunFam" id="3.30.1330.50:FF:000001">
    <property type="entry name" value="2-C-methyl-D-erythritol 2,4-cyclodiphosphate synthase"/>
    <property type="match status" value="1"/>
</dbReference>
<dbReference type="Gene3D" id="3.30.1330.50">
    <property type="entry name" value="2-C-methyl-D-erythritol 2,4-cyclodiphosphate synthase"/>
    <property type="match status" value="1"/>
</dbReference>
<dbReference type="HAMAP" id="MF_00107">
    <property type="entry name" value="IspF"/>
    <property type="match status" value="1"/>
</dbReference>
<dbReference type="InterPro" id="IPR003526">
    <property type="entry name" value="MECDP_synthase"/>
</dbReference>
<dbReference type="InterPro" id="IPR020555">
    <property type="entry name" value="MECDP_synthase_CS"/>
</dbReference>
<dbReference type="InterPro" id="IPR036571">
    <property type="entry name" value="MECDP_synthase_sf"/>
</dbReference>
<dbReference type="NCBIfam" id="TIGR00151">
    <property type="entry name" value="ispF"/>
    <property type="match status" value="1"/>
</dbReference>
<dbReference type="PANTHER" id="PTHR43181">
    <property type="entry name" value="2-C-METHYL-D-ERYTHRITOL 2,4-CYCLODIPHOSPHATE SYNTHASE, CHLOROPLASTIC"/>
    <property type="match status" value="1"/>
</dbReference>
<dbReference type="PANTHER" id="PTHR43181:SF1">
    <property type="entry name" value="2-C-METHYL-D-ERYTHRITOL 2,4-CYCLODIPHOSPHATE SYNTHASE, CHLOROPLASTIC"/>
    <property type="match status" value="1"/>
</dbReference>
<dbReference type="Pfam" id="PF02542">
    <property type="entry name" value="YgbB"/>
    <property type="match status" value="1"/>
</dbReference>
<dbReference type="SUPFAM" id="SSF69765">
    <property type="entry name" value="IpsF-like"/>
    <property type="match status" value="1"/>
</dbReference>
<dbReference type="PROSITE" id="PS01350">
    <property type="entry name" value="ISPF"/>
    <property type="match status" value="1"/>
</dbReference>